<sequence length="890" mass="95435">MAAAASSSSAASLPQTGAEIRSAFLRFYEERGHKVMASASLIPEDPTVLLTIAGMLPFKPVFLGQQERPAPRATSSQKCIRTNDIENVGRTARHHTFFEMLGNFSFGDYFKQQAIEWAWQLSTEVYGIDPKHLVVSVFREDDEAEQIWRDVVGVNPKRIIRMDEADNFWASGPTGPCGPCSEIYYDFKPELGDEGIDLEDDDRFIEFYNLVFMQYNRDAEGSLTPLANRNIDTGLGLERMAQILQKVPNNYETDLIFPLIQAAADCAGVDYHQLDDAGKTSLKVIGDHSRAVTQLICDGVTASNLGRGYILRRLLRRVVRHGRLLGINKPFLVMMGEASIALLKDAHPSVLERQEVILAELQREESRFLETLERGEKLLSEVLDSKPKQISGAQAFELYDTYGFPLELTQEIAEEQGLEVDLAGFEEAMEQQRQRAKAAAVSIDLTLQDAIDQVVATQKATAFQGYQRLEQPSCVQALVANGEPATSASAGDHVQIVLESTPFYGEGGGQVGDRGVLSGADVIVAIESVSRSRDVFVHAGRIERGQLTVGDAITAQVDRACRRRAQANHTATHLLQAALKQVVDPGIGQAGSLVDFDRLRFDFHAPQAVTTEQLGQIETLINGWIAEAHGLLVEEMAIDQAKAAGAVAMFGEKYADVVRVVDVPGVSMELCGGTHVANTAEIGLFKIVGESGVAAGIRRIEAVAGASVLGYLNERELVVKQLGDRFKAQPGEIVERVVALQDELKSTGKALIAAQAELAVAKSAALATKAVAIGSFQLLVERLDGVDGTGLQGAAQSLAAQLGDGAAVVLGGLPDPSDQGKVILVAAFGKDVIAAKQQAGKFIGTIAKLCGGGGGGRPNLAQAGGRDGAALAGALETARMELTAALQQQG</sequence>
<name>SYA_SYNS9</name>
<keyword id="KW-0030">Aminoacyl-tRNA synthetase</keyword>
<keyword id="KW-0067">ATP-binding</keyword>
<keyword id="KW-0963">Cytoplasm</keyword>
<keyword id="KW-0436">Ligase</keyword>
<keyword id="KW-0479">Metal-binding</keyword>
<keyword id="KW-0547">Nucleotide-binding</keyword>
<keyword id="KW-0648">Protein biosynthesis</keyword>
<keyword id="KW-1185">Reference proteome</keyword>
<keyword id="KW-0694">RNA-binding</keyword>
<keyword id="KW-0820">tRNA-binding</keyword>
<keyword id="KW-0862">Zinc</keyword>
<evidence type="ECO:0000255" key="1">
    <source>
        <dbReference type="HAMAP-Rule" id="MF_00036"/>
    </source>
</evidence>
<evidence type="ECO:0000305" key="2"/>
<comment type="function">
    <text evidence="1">Catalyzes the attachment of alanine to tRNA(Ala) in a two-step reaction: alanine is first activated by ATP to form Ala-AMP and then transferred to the acceptor end of tRNA(Ala). Also edits incorrectly charged Ser-tRNA(Ala) and Gly-tRNA(Ala) via its editing domain.</text>
</comment>
<comment type="catalytic activity">
    <reaction evidence="1">
        <text>tRNA(Ala) + L-alanine + ATP = L-alanyl-tRNA(Ala) + AMP + diphosphate</text>
        <dbReference type="Rhea" id="RHEA:12540"/>
        <dbReference type="Rhea" id="RHEA-COMP:9657"/>
        <dbReference type="Rhea" id="RHEA-COMP:9923"/>
        <dbReference type="ChEBI" id="CHEBI:30616"/>
        <dbReference type="ChEBI" id="CHEBI:33019"/>
        <dbReference type="ChEBI" id="CHEBI:57972"/>
        <dbReference type="ChEBI" id="CHEBI:78442"/>
        <dbReference type="ChEBI" id="CHEBI:78497"/>
        <dbReference type="ChEBI" id="CHEBI:456215"/>
        <dbReference type="EC" id="6.1.1.7"/>
    </reaction>
</comment>
<comment type="cofactor">
    <cofactor evidence="1">
        <name>Zn(2+)</name>
        <dbReference type="ChEBI" id="CHEBI:29105"/>
    </cofactor>
    <text evidence="1">Binds 1 zinc ion per subunit.</text>
</comment>
<comment type="subcellular location">
    <subcellularLocation>
        <location evidence="1">Cytoplasm</location>
    </subcellularLocation>
</comment>
<comment type="domain">
    <text evidence="1">Consists of three domains; the N-terminal catalytic domain, the editing domain and the C-terminal C-Ala domain. The editing domain removes incorrectly charged amino acids, while the C-Ala domain, along with tRNA(Ala), serves as a bridge to cooperatively bring together the editing and aminoacylation centers thus stimulating deacylation of misacylated tRNAs.</text>
</comment>
<comment type="similarity">
    <text evidence="1">Belongs to the class-II aminoacyl-tRNA synthetase family.</text>
</comment>
<comment type="sequence caution" evidence="2">
    <conflict type="erroneous initiation">
        <sequence resource="EMBL-CDS" id="ABB27131"/>
    </conflict>
</comment>
<accession>Q3AVV3</accession>
<reference key="1">
    <citation type="submission" date="2005-08" db="EMBL/GenBank/DDBJ databases">
        <title>Complete sequence of Synechococcus sp. CC9902.</title>
        <authorList>
            <person name="Copeland A."/>
            <person name="Lucas S."/>
            <person name="Lapidus A."/>
            <person name="Barry K."/>
            <person name="Detter J.C."/>
            <person name="Glavina T."/>
            <person name="Hammon N."/>
            <person name="Israni S."/>
            <person name="Pitluck S."/>
            <person name="Martinez M."/>
            <person name="Schmutz J."/>
            <person name="Larimer F."/>
            <person name="Land M."/>
            <person name="Kyrpides N."/>
            <person name="Ivanova N."/>
            <person name="Richardson P."/>
        </authorList>
    </citation>
    <scope>NUCLEOTIDE SEQUENCE [LARGE SCALE GENOMIC DNA]</scope>
    <source>
        <strain>CC9902</strain>
    </source>
</reference>
<protein>
    <recommendedName>
        <fullName evidence="1">Alanine--tRNA ligase</fullName>
        <ecNumber evidence="1">6.1.1.7</ecNumber>
    </recommendedName>
    <alternativeName>
        <fullName evidence="1">Alanyl-tRNA synthetase</fullName>
        <shortName evidence="1">AlaRS</shortName>
    </alternativeName>
</protein>
<organism>
    <name type="scientific">Synechococcus sp. (strain CC9902)</name>
    <dbReference type="NCBI Taxonomy" id="316279"/>
    <lineage>
        <taxon>Bacteria</taxon>
        <taxon>Bacillati</taxon>
        <taxon>Cyanobacteriota</taxon>
        <taxon>Cyanophyceae</taxon>
        <taxon>Synechococcales</taxon>
        <taxon>Synechococcaceae</taxon>
        <taxon>Synechococcus</taxon>
    </lineage>
</organism>
<gene>
    <name evidence="1" type="primary">alaS</name>
    <name type="ordered locus">Syncc9902_2173</name>
</gene>
<feature type="chain" id="PRO_0000347839" description="Alanine--tRNA ligase">
    <location>
        <begin position="1"/>
        <end position="890"/>
    </location>
</feature>
<feature type="binding site" evidence="1">
    <location>
        <position position="569"/>
    </location>
    <ligand>
        <name>Zn(2+)</name>
        <dbReference type="ChEBI" id="CHEBI:29105"/>
    </ligand>
</feature>
<feature type="binding site" evidence="1">
    <location>
        <position position="573"/>
    </location>
    <ligand>
        <name>Zn(2+)</name>
        <dbReference type="ChEBI" id="CHEBI:29105"/>
    </ligand>
</feature>
<feature type="binding site" evidence="1">
    <location>
        <position position="671"/>
    </location>
    <ligand>
        <name>Zn(2+)</name>
        <dbReference type="ChEBI" id="CHEBI:29105"/>
    </ligand>
</feature>
<feature type="binding site" evidence="1">
    <location>
        <position position="675"/>
    </location>
    <ligand>
        <name>Zn(2+)</name>
        <dbReference type="ChEBI" id="CHEBI:29105"/>
    </ligand>
</feature>
<dbReference type="EC" id="6.1.1.7" evidence="1"/>
<dbReference type="EMBL" id="CP000097">
    <property type="protein sequence ID" value="ABB27131.1"/>
    <property type="status" value="ALT_INIT"/>
    <property type="molecule type" value="Genomic_DNA"/>
</dbReference>
<dbReference type="RefSeq" id="WP_041425582.1">
    <property type="nucleotide sequence ID" value="NC_007513.1"/>
</dbReference>
<dbReference type="SMR" id="Q3AVV3"/>
<dbReference type="STRING" id="316279.Syncc9902_2173"/>
<dbReference type="KEGG" id="sye:Syncc9902_2173"/>
<dbReference type="eggNOG" id="COG0013">
    <property type="taxonomic scope" value="Bacteria"/>
</dbReference>
<dbReference type="HOGENOM" id="CLU_004485_1_0_3"/>
<dbReference type="OrthoDB" id="9803884at2"/>
<dbReference type="Proteomes" id="UP000002712">
    <property type="component" value="Chromosome"/>
</dbReference>
<dbReference type="GO" id="GO:0005829">
    <property type="term" value="C:cytosol"/>
    <property type="evidence" value="ECO:0007669"/>
    <property type="project" value="TreeGrafter"/>
</dbReference>
<dbReference type="GO" id="GO:0004813">
    <property type="term" value="F:alanine-tRNA ligase activity"/>
    <property type="evidence" value="ECO:0007669"/>
    <property type="project" value="UniProtKB-UniRule"/>
</dbReference>
<dbReference type="GO" id="GO:0002161">
    <property type="term" value="F:aminoacyl-tRNA deacylase activity"/>
    <property type="evidence" value="ECO:0007669"/>
    <property type="project" value="TreeGrafter"/>
</dbReference>
<dbReference type="GO" id="GO:0005524">
    <property type="term" value="F:ATP binding"/>
    <property type="evidence" value="ECO:0007669"/>
    <property type="project" value="UniProtKB-UniRule"/>
</dbReference>
<dbReference type="GO" id="GO:0000049">
    <property type="term" value="F:tRNA binding"/>
    <property type="evidence" value="ECO:0007669"/>
    <property type="project" value="UniProtKB-KW"/>
</dbReference>
<dbReference type="GO" id="GO:0008270">
    <property type="term" value="F:zinc ion binding"/>
    <property type="evidence" value="ECO:0007669"/>
    <property type="project" value="UniProtKB-UniRule"/>
</dbReference>
<dbReference type="GO" id="GO:0006419">
    <property type="term" value="P:alanyl-tRNA aminoacylation"/>
    <property type="evidence" value="ECO:0007669"/>
    <property type="project" value="UniProtKB-UniRule"/>
</dbReference>
<dbReference type="CDD" id="cd00673">
    <property type="entry name" value="AlaRS_core"/>
    <property type="match status" value="1"/>
</dbReference>
<dbReference type="FunFam" id="2.40.30.130:FF:000001">
    <property type="entry name" value="Alanine--tRNA ligase"/>
    <property type="match status" value="1"/>
</dbReference>
<dbReference type="FunFam" id="3.10.310.40:FF:000001">
    <property type="entry name" value="Alanine--tRNA ligase"/>
    <property type="match status" value="1"/>
</dbReference>
<dbReference type="FunFam" id="3.30.54.20:FF:000001">
    <property type="entry name" value="Alanine--tRNA ligase"/>
    <property type="match status" value="1"/>
</dbReference>
<dbReference type="FunFam" id="3.30.930.10:FF:000004">
    <property type="entry name" value="Alanine--tRNA ligase"/>
    <property type="match status" value="1"/>
</dbReference>
<dbReference type="FunFam" id="3.30.980.10:FF:000004">
    <property type="entry name" value="Alanine--tRNA ligase, cytoplasmic"/>
    <property type="match status" value="1"/>
</dbReference>
<dbReference type="Gene3D" id="2.40.30.130">
    <property type="match status" value="1"/>
</dbReference>
<dbReference type="Gene3D" id="3.10.310.40">
    <property type="match status" value="1"/>
</dbReference>
<dbReference type="Gene3D" id="3.30.54.20">
    <property type="match status" value="1"/>
</dbReference>
<dbReference type="Gene3D" id="3.30.930.10">
    <property type="entry name" value="Bira Bifunctional Protein, Domain 2"/>
    <property type="match status" value="1"/>
</dbReference>
<dbReference type="Gene3D" id="3.30.980.10">
    <property type="entry name" value="Threonyl-trna Synthetase, Chain A, domain 2"/>
    <property type="match status" value="1"/>
</dbReference>
<dbReference type="HAMAP" id="MF_00036_B">
    <property type="entry name" value="Ala_tRNA_synth_B"/>
    <property type="match status" value="1"/>
</dbReference>
<dbReference type="InterPro" id="IPR045864">
    <property type="entry name" value="aa-tRNA-synth_II/BPL/LPL"/>
</dbReference>
<dbReference type="InterPro" id="IPR002318">
    <property type="entry name" value="Ala-tRNA-lgiase_IIc"/>
</dbReference>
<dbReference type="InterPro" id="IPR018162">
    <property type="entry name" value="Ala-tRNA-ligase_IIc_anticod-bd"/>
</dbReference>
<dbReference type="InterPro" id="IPR018165">
    <property type="entry name" value="Ala-tRNA-synth_IIc_core"/>
</dbReference>
<dbReference type="InterPro" id="IPR018164">
    <property type="entry name" value="Ala-tRNA-synth_IIc_N"/>
</dbReference>
<dbReference type="InterPro" id="IPR050058">
    <property type="entry name" value="Ala-tRNA_ligase"/>
</dbReference>
<dbReference type="InterPro" id="IPR023033">
    <property type="entry name" value="Ala_tRNA_ligase_euk/bac"/>
</dbReference>
<dbReference type="InterPro" id="IPR003156">
    <property type="entry name" value="DHHA1_dom"/>
</dbReference>
<dbReference type="InterPro" id="IPR018163">
    <property type="entry name" value="Thr/Ala-tRNA-synth_IIc_edit"/>
</dbReference>
<dbReference type="InterPro" id="IPR009000">
    <property type="entry name" value="Transl_B-barrel_sf"/>
</dbReference>
<dbReference type="InterPro" id="IPR012947">
    <property type="entry name" value="tRNA_SAD"/>
</dbReference>
<dbReference type="NCBIfam" id="TIGR00344">
    <property type="entry name" value="alaS"/>
    <property type="match status" value="1"/>
</dbReference>
<dbReference type="PANTHER" id="PTHR11777:SF9">
    <property type="entry name" value="ALANINE--TRNA LIGASE, CYTOPLASMIC"/>
    <property type="match status" value="1"/>
</dbReference>
<dbReference type="PANTHER" id="PTHR11777">
    <property type="entry name" value="ALANYL-TRNA SYNTHETASE"/>
    <property type="match status" value="1"/>
</dbReference>
<dbReference type="Pfam" id="PF02272">
    <property type="entry name" value="DHHA1"/>
    <property type="match status" value="1"/>
</dbReference>
<dbReference type="Pfam" id="PF01411">
    <property type="entry name" value="tRNA-synt_2c"/>
    <property type="match status" value="1"/>
</dbReference>
<dbReference type="Pfam" id="PF07973">
    <property type="entry name" value="tRNA_SAD"/>
    <property type="match status" value="1"/>
</dbReference>
<dbReference type="PRINTS" id="PR00980">
    <property type="entry name" value="TRNASYNTHALA"/>
</dbReference>
<dbReference type="SMART" id="SM00863">
    <property type="entry name" value="tRNA_SAD"/>
    <property type="match status" value="1"/>
</dbReference>
<dbReference type="SUPFAM" id="SSF55681">
    <property type="entry name" value="Class II aaRS and biotin synthetases"/>
    <property type="match status" value="1"/>
</dbReference>
<dbReference type="SUPFAM" id="SSF101353">
    <property type="entry name" value="Putative anticodon-binding domain of alanyl-tRNA synthetase (AlaRS)"/>
    <property type="match status" value="1"/>
</dbReference>
<dbReference type="SUPFAM" id="SSF55186">
    <property type="entry name" value="ThrRS/AlaRS common domain"/>
    <property type="match status" value="1"/>
</dbReference>
<dbReference type="SUPFAM" id="SSF50447">
    <property type="entry name" value="Translation proteins"/>
    <property type="match status" value="1"/>
</dbReference>
<dbReference type="PROSITE" id="PS50860">
    <property type="entry name" value="AA_TRNA_LIGASE_II_ALA"/>
    <property type="match status" value="1"/>
</dbReference>
<proteinExistence type="inferred from homology"/>